<sequence length="446" mass="48465">MPFIPHTPDDIEKMLAVIGAESIDQLFDEIPSALANIQQVPPGLNEAGITRLMEKREPNKQLCFIGAGAYEHHIPAAVWEIATRGEFYTAYTPYQAEASQGSLQLIYEYQTMMAELMAMDVSNASLYDGASALAEAALMAVRIKRGKAQRILVPASVNPFYRKVLSSIVEQQKINVEIIPFDPTMGIVNSELLKAKNAEGAAAIIIPQPNFFGCLEAVDVLTDWAHANDLLVIASVNPTAMALLKPPGQWGQKGADIVCGEGQPLGVPLASGGPYFGFMCCKKDYVRQLPGRIVGRTVDKKGREGFTLTLQAREQHIRRSKATSNICTNQGLAVVAATIYLSLLGATGLREVALASHTQSRDLFQRLSAVKGVSPVFSSPIFHEFVVRLEKPVEEVLAAMAEQGIQAGFSLKNDYPKLGNGLLICVTDTKTDDDLMAYENALRSIQ</sequence>
<evidence type="ECO:0000255" key="1">
    <source>
        <dbReference type="HAMAP-Rule" id="MF_00712"/>
    </source>
</evidence>
<name>GCSPA_COXBR</name>
<dbReference type="EC" id="1.4.4.2" evidence="1"/>
<dbReference type="EMBL" id="CP000890">
    <property type="protein sequence ID" value="ABX77839.1"/>
    <property type="molecule type" value="Genomic_DNA"/>
</dbReference>
<dbReference type="RefSeq" id="WP_005770511.1">
    <property type="nucleotide sequence ID" value="NC_010117.1"/>
</dbReference>
<dbReference type="SMR" id="A9NA77"/>
<dbReference type="KEGG" id="cbs:COXBURSA331_A1902"/>
<dbReference type="HOGENOM" id="CLU_004620_0_2_6"/>
<dbReference type="GO" id="GO:0004375">
    <property type="term" value="F:glycine dehydrogenase (decarboxylating) activity"/>
    <property type="evidence" value="ECO:0007669"/>
    <property type="project" value="UniProtKB-EC"/>
</dbReference>
<dbReference type="GO" id="GO:0019464">
    <property type="term" value="P:glycine decarboxylation via glycine cleavage system"/>
    <property type="evidence" value="ECO:0007669"/>
    <property type="project" value="UniProtKB-UniRule"/>
</dbReference>
<dbReference type="GO" id="GO:0009116">
    <property type="term" value="P:nucleoside metabolic process"/>
    <property type="evidence" value="ECO:0007669"/>
    <property type="project" value="InterPro"/>
</dbReference>
<dbReference type="CDD" id="cd00613">
    <property type="entry name" value="GDC-P"/>
    <property type="match status" value="1"/>
</dbReference>
<dbReference type="FunFam" id="3.40.640.10:FF:000113">
    <property type="entry name" value="Probable glycine dehydrogenase (decarboxylating) subunit 1"/>
    <property type="match status" value="1"/>
</dbReference>
<dbReference type="Gene3D" id="3.90.1150.10">
    <property type="entry name" value="Aspartate Aminotransferase, domain 1"/>
    <property type="match status" value="1"/>
</dbReference>
<dbReference type="Gene3D" id="3.40.640.10">
    <property type="entry name" value="Type I PLP-dependent aspartate aminotransferase-like (Major domain)"/>
    <property type="match status" value="1"/>
</dbReference>
<dbReference type="HAMAP" id="MF_00712">
    <property type="entry name" value="GcvPA"/>
    <property type="match status" value="1"/>
</dbReference>
<dbReference type="InterPro" id="IPR023010">
    <property type="entry name" value="GcvPA"/>
</dbReference>
<dbReference type="InterPro" id="IPR049315">
    <property type="entry name" value="GDC-P_N"/>
</dbReference>
<dbReference type="InterPro" id="IPR020581">
    <property type="entry name" value="GDC_P"/>
</dbReference>
<dbReference type="InterPro" id="IPR015424">
    <property type="entry name" value="PyrdxlP-dep_Trfase"/>
</dbReference>
<dbReference type="InterPro" id="IPR015421">
    <property type="entry name" value="PyrdxlP-dep_Trfase_major"/>
</dbReference>
<dbReference type="InterPro" id="IPR015422">
    <property type="entry name" value="PyrdxlP-dep_Trfase_small"/>
</dbReference>
<dbReference type="NCBIfam" id="NF001696">
    <property type="entry name" value="PRK00451.1"/>
    <property type="match status" value="1"/>
</dbReference>
<dbReference type="PANTHER" id="PTHR42806">
    <property type="entry name" value="GLYCINE CLEAVAGE SYSTEM P-PROTEIN"/>
    <property type="match status" value="1"/>
</dbReference>
<dbReference type="PANTHER" id="PTHR42806:SF1">
    <property type="entry name" value="GLYCINE DEHYDROGENASE (DECARBOXYLATING)"/>
    <property type="match status" value="1"/>
</dbReference>
<dbReference type="Pfam" id="PF02347">
    <property type="entry name" value="GDC-P"/>
    <property type="match status" value="1"/>
</dbReference>
<dbReference type="PIRSF" id="PIRSF006815">
    <property type="entry name" value="GcvPA"/>
    <property type="match status" value="1"/>
</dbReference>
<dbReference type="SUPFAM" id="SSF53383">
    <property type="entry name" value="PLP-dependent transferases"/>
    <property type="match status" value="1"/>
</dbReference>
<accession>A9NA77</accession>
<gene>
    <name evidence="1" type="primary">gcvPA</name>
    <name type="ordered locus">COXBURSA331_A1902</name>
</gene>
<keyword id="KW-0560">Oxidoreductase</keyword>
<organism>
    <name type="scientific">Coxiella burnetii (strain RSA 331 / Henzerling II)</name>
    <dbReference type="NCBI Taxonomy" id="360115"/>
    <lineage>
        <taxon>Bacteria</taxon>
        <taxon>Pseudomonadati</taxon>
        <taxon>Pseudomonadota</taxon>
        <taxon>Gammaproteobacteria</taxon>
        <taxon>Legionellales</taxon>
        <taxon>Coxiellaceae</taxon>
        <taxon>Coxiella</taxon>
    </lineage>
</organism>
<reference key="1">
    <citation type="submission" date="2007-11" db="EMBL/GenBank/DDBJ databases">
        <title>Genome sequencing of phylogenetically and phenotypically diverse Coxiella burnetii isolates.</title>
        <authorList>
            <person name="Seshadri R."/>
            <person name="Samuel J.E."/>
        </authorList>
    </citation>
    <scope>NUCLEOTIDE SEQUENCE [LARGE SCALE GENOMIC DNA]</scope>
    <source>
        <strain>RSA 331 / Henzerling II</strain>
    </source>
</reference>
<protein>
    <recommendedName>
        <fullName evidence="1">Probable glycine dehydrogenase (decarboxylating) subunit 1</fullName>
        <ecNumber evidence="1">1.4.4.2</ecNumber>
    </recommendedName>
    <alternativeName>
        <fullName evidence="1">Glycine cleavage system P-protein subunit 1</fullName>
    </alternativeName>
    <alternativeName>
        <fullName evidence="1">Glycine decarboxylase subunit 1</fullName>
    </alternativeName>
    <alternativeName>
        <fullName evidence="1">Glycine dehydrogenase (aminomethyl-transferring) subunit 1</fullName>
    </alternativeName>
</protein>
<comment type="function">
    <text evidence="1">The glycine cleavage system catalyzes the degradation of glycine. The P protein binds the alpha-amino group of glycine through its pyridoxal phosphate cofactor; CO(2) is released and the remaining methylamine moiety is then transferred to the lipoamide cofactor of the H protein.</text>
</comment>
<comment type="catalytic activity">
    <reaction evidence="1">
        <text>N(6)-[(R)-lipoyl]-L-lysyl-[glycine-cleavage complex H protein] + glycine + H(+) = N(6)-[(R)-S(8)-aminomethyldihydrolipoyl]-L-lysyl-[glycine-cleavage complex H protein] + CO2</text>
        <dbReference type="Rhea" id="RHEA:24304"/>
        <dbReference type="Rhea" id="RHEA-COMP:10494"/>
        <dbReference type="Rhea" id="RHEA-COMP:10495"/>
        <dbReference type="ChEBI" id="CHEBI:15378"/>
        <dbReference type="ChEBI" id="CHEBI:16526"/>
        <dbReference type="ChEBI" id="CHEBI:57305"/>
        <dbReference type="ChEBI" id="CHEBI:83099"/>
        <dbReference type="ChEBI" id="CHEBI:83143"/>
        <dbReference type="EC" id="1.4.4.2"/>
    </reaction>
</comment>
<comment type="subunit">
    <text evidence="1">The glycine cleavage system is composed of four proteins: P, T, L and H. In this organism, the P 'protein' is a heterodimer of two subunits.</text>
</comment>
<comment type="similarity">
    <text evidence="1">Belongs to the GcvP family. N-terminal subunit subfamily.</text>
</comment>
<proteinExistence type="inferred from homology"/>
<feature type="chain" id="PRO_1000083220" description="Probable glycine dehydrogenase (decarboxylating) subunit 1">
    <location>
        <begin position="1"/>
        <end position="446"/>
    </location>
</feature>